<organism>
    <name type="scientific">Salmonella typhi</name>
    <dbReference type="NCBI Taxonomy" id="90370"/>
    <lineage>
        <taxon>Bacteria</taxon>
        <taxon>Pseudomonadati</taxon>
        <taxon>Pseudomonadota</taxon>
        <taxon>Gammaproteobacteria</taxon>
        <taxon>Enterobacterales</taxon>
        <taxon>Enterobacteriaceae</taxon>
        <taxon>Salmonella</taxon>
    </lineage>
</organism>
<gene>
    <name evidence="1" type="primary">msrP</name>
    <name type="ordered locus">STY3557</name>
    <name type="ordered locus">t3292</name>
</gene>
<proteinExistence type="inferred from homology"/>
<keyword id="KW-0479">Metal-binding</keyword>
<keyword id="KW-0500">Molybdenum</keyword>
<keyword id="KW-0560">Oxidoreductase</keyword>
<keyword id="KW-0574">Periplasm</keyword>
<keyword id="KW-0732">Signal</keyword>
<feature type="signal peptide" description="Tat-type signal" evidence="1">
    <location>
        <begin position="1"/>
        <end position="44"/>
    </location>
</feature>
<feature type="chain" id="PRO_0000070697" description="Protein-methionine-sulfoxide reductase catalytic subunit MsrP" evidence="1">
    <location>
        <begin position="45"/>
        <end position="334"/>
    </location>
</feature>
<feature type="binding site" evidence="1">
    <location>
        <position position="88"/>
    </location>
    <ligand>
        <name>Mo-molybdopterin</name>
        <dbReference type="ChEBI" id="CHEBI:71302"/>
    </ligand>
</feature>
<feature type="binding site" evidence="1">
    <location>
        <begin position="91"/>
        <end position="92"/>
    </location>
    <ligand>
        <name>Mo-molybdopterin</name>
        <dbReference type="ChEBI" id="CHEBI:71302"/>
    </ligand>
</feature>
<feature type="binding site" evidence="1">
    <location>
        <position position="146"/>
    </location>
    <ligand>
        <name>Mo-molybdopterin</name>
        <dbReference type="ChEBI" id="CHEBI:71302"/>
    </ligand>
    <ligandPart>
        <name>Mo</name>
        <dbReference type="ChEBI" id="CHEBI:28685"/>
    </ligandPart>
</feature>
<feature type="binding site" evidence="1">
    <location>
        <position position="181"/>
    </location>
    <ligand>
        <name>Mo-molybdopterin</name>
        <dbReference type="ChEBI" id="CHEBI:71302"/>
    </ligand>
</feature>
<feature type="binding site" evidence="1">
    <location>
        <position position="233"/>
    </location>
    <ligand>
        <name>Mo-molybdopterin</name>
        <dbReference type="ChEBI" id="CHEBI:71302"/>
    </ligand>
</feature>
<feature type="binding site" evidence="1">
    <location>
        <position position="238"/>
    </location>
    <ligand>
        <name>Mo-molybdopterin</name>
        <dbReference type="ChEBI" id="CHEBI:71302"/>
    </ligand>
</feature>
<feature type="binding site" evidence="1">
    <location>
        <begin position="249"/>
        <end position="251"/>
    </location>
    <ligand>
        <name>Mo-molybdopterin</name>
        <dbReference type="ChEBI" id="CHEBI:71302"/>
    </ligand>
</feature>
<reference key="1">
    <citation type="journal article" date="2001" name="Nature">
        <title>Complete genome sequence of a multiple drug resistant Salmonella enterica serovar Typhi CT18.</title>
        <authorList>
            <person name="Parkhill J."/>
            <person name="Dougan G."/>
            <person name="James K.D."/>
            <person name="Thomson N.R."/>
            <person name="Pickard D."/>
            <person name="Wain J."/>
            <person name="Churcher C.M."/>
            <person name="Mungall K.L."/>
            <person name="Bentley S.D."/>
            <person name="Holden M.T.G."/>
            <person name="Sebaihia M."/>
            <person name="Baker S."/>
            <person name="Basham D."/>
            <person name="Brooks K."/>
            <person name="Chillingworth T."/>
            <person name="Connerton P."/>
            <person name="Cronin A."/>
            <person name="Davis P."/>
            <person name="Davies R.M."/>
            <person name="Dowd L."/>
            <person name="White N."/>
            <person name="Farrar J."/>
            <person name="Feltwell T."/>
            <person name="Hamlin N."/>
            <person name="Haque A."/>
            <person name="Hien T.T."/>
            <person name="Holroyd S."/>
            <person name="Jagels K."/>
            <person name="Krogh A."/>
            <person name="Larsen T.S."/>
            <person name="Leather S."/>
            <person name="Moule S."/>
            <person name="O'Gaora P."/>
            <person name="Parry C."/>
            <person name="Quail M.A."/>
            <person name="Rutherford K.M."/>
            <person name="Simmonds M."/>
            <person name="Skelton J."/>
            <person name="Stevens K."/>
            <person name="Whitehead S."/>
            <person name="Barrell B.G."/>
        </authorList>
    </citation>
    <scope>NUCLEOTIDE SEQUENCE [LARGE SCALE GENOMIC DNA]</scope>
    <source>
        <strain>CT18</strain>
    </source>
</reference>
<reference key="2">
    <citation type="journal article" date="2003" name="J. Bacteriol.">
        <title>Comparative genomics of Salmonella enterica serovar Typhi strains Ty2 and CT18.</title>
        <authorList>
            <person name="Deng W."/>
            <person name="Liou S.-R."/>
            <person name="Plunkett G. III"/>
            <person name="Mayhew G.F."/>
            <person name="Rose D.J."/>
            <person name="Burland V."/>
            <person name="Kodoyianni V."/>
            <person name="Schwartz D.C."/>
            <person name="Blattner F.R."/>
        </authorList>
    </citation>
    <scope>NUCLEOTIDE SEQUENCE [LARGE SCALE GENOMIC DNA]</scope>
    <source>
        <strain>ATCC 700931 / Ty2</strain>
    </source>
</reference>
<evidence type="ECO:0000255" key="1">
    <source>
        <dbReference type="HAMAP-Rule" id="MF_01206"/>
    </source>
</evidence>
<sequence length="334" mass="37492">MKKIRPLTEADVTAESAFFMQRRQVLKALGISAAALSLPSTAQADLFSWFKGNDRPKAPAGKPLEFSQPAAWRSDLALTPEDKVTGYNNFYEFGLDKADPAANAGSLKTEPWTLKISGEVAKPFTLDYDDLTHRFPLEERIYRMRCVEAWSMVVPWIGFPLYKLLAQAQPTSHAKYVAFETLYAPDDMPGQKDRFIGGGLKYPYVEGLRLDEAMHPLTLMTVGVYGKALPPQNGAPIRLIVPWKYGFKGIKSIVSIKLTRERPPTTWNLSAPNEYGFYANVNPHVDHPRWSQATERFIGSGGILDVQRQPTLLFNGYANEVASLYRGLNLRENF</sequence>
<name>MSRP_SALTI</name>
<comment type="function">
    <text evidence="1">Part of the MsrPQ system that repairs oxidized periplasmic proteins containing methionine sulfoxide residues (Met-O), using respiratory chain electrons. Thus protects these proteins from oxidative-stress damage caused by reactive species of oxygen and chlorine generated by the host defense mechanisms. MsrPQ is essential for the maintenance of envelope integrity under bleach stress, rescuing a wide series of structurally unrelated periplasmic proteins from methionine oxidation, including the primary periplasmic chaperone SurA and the lipoprotein Pal. The catalytic subunit MsrP is non-stereospecific, being able to reduce both (R-) and (S-) diastereoisomers of methionine sulfoxide.</text>
</comment>
<comment type="catalytic activity">
    <reaction evidence="1">
        <text>L-methionyl-[protein] + a quinone + H2O = L-methionyl-(S)-S-oxide-[protein] + a quinol</text>
        <dbReference type="Rhea" id="RHEA:51292"/>
        <dbReference type="Rhea" id="RHEA-COMP:12313"/>
        <dbReference type="Rhea" id="RHEA-COMP:12315"/>
        <dbReference type="ChEBI" id="CHEBI:15377"/>
        <dbReference type="ChEBI" id="CHEBI:16044"/>
        <dbReference type="ChEBI" id="CHEBI:24646"/>
        <dbReference type="ChEBI" id="CHEBI:44120"/>
        <dbReference type="ChEBI" id="CHEBI:132124"/>
    </reaction>
</comment>
<comment type="catalytic activity">
    <reaction evidence="1">
        <text>L-methionyl-[protein] + a quinone + H2O = L-methionyl-(R)-S-oxide-[protein] + a quinol</text>
        <dbReference type="Rhea" id="RHEA:51296"/>
        <dbReference type="Rhea" id="RHEA-COMP:12313"/>
        <dbReference type="Rhea" id="RHEA-COMP:12314"/>
        <dbReference type="ChEBI" id="CHEBI:15377"/>
        <dbReference type="ChEBI" id="CHEBI:16044"/>
        <dbReference type="ChEBI" id="CHEBI:24646"/>
        <dbReference type="ChEBI" id="CHEBI:45764"/>
        <dbReference type="ChEBI" id="CHEBI:132124"/>
    </reaction>
</comment>
<comment type="cofactor">
    <cofactor evidence="1">
        <name>Mo-molybdopterin</name>
        <dbReference type="ChEBI" id="CHEBI:71302"/>
    </cofactor>
    <text evidence="1">Binds 1 Mo-molybdopterin (Mo-MPT) cofactor per subunit.</text>
</comment>
<comment type="subunit">
    <text evidence="1">Heterodimer of a catalytic subunit (MsrP) and a heme-binding subunit (MsrQ).</text>
</comment>
<comment type="subcellular location">
    <subcellularLocation>
        <location evidence="1">Periplasm</location>
    </subcellularLocation>
    <text evidence="1">Is attached to the inner membrane when interacting with the MsrQ subunit.</text>
</comment>
<comment type="PTM">
    <text evidence="1">Predicted to be exported by the Tat system. The position of the signal peptide cleavage has not been experimentally proven.</text>
</comment>
<comment type="similarity">
    <text evidence="1">Belongs to the MsrP family.</text>
</comment>
<dbReference type="EC" id="1.8.5.-" evidence="1"/>
<dbReference type="EMBL" id="AL513382">
    <property type="protein sequence ID" value="CAD07892.1"/>
    <property type="molecule type" value="Genomic_DNA"/>
</dbReference>
<dbReference type="EMBL" id="AE014613">
    <property type="protein sequence ID" value="AAO70827.1"/>
    <property type="molecule type" value="Genomic_DNA"/>
</dbReference>
<dbReference type="RefSeq" id="NP_457753.1">
    <property type="nucleotide sequence ID" value="NC_003198.1"/>
</dbReference>
<dbReference type="RefSeq" id="WP_000723876.1">
    <property type="nucleotide sequence ID" value="NZ_WSUR01000038.1"/>
</dbReference>
<dbReference type="SMR" id="P67348"/>
<dbReference type="STRING" id="220341.gene:17587405"/>
<dbReference type="KEGG" id="stt:t3292"/>
<dbReference type="KEGG" id="sty:STY3557"/>
<dbReference type="PATRIC" id="fig|220341.7.peg.3621"/>
<dbReference type="eggNOG" id="COG2041">
    <property type="taxonomic scope" value="Bacteria"/>
</dbReference>
<dbReference type="HOGENOM" id="CLU_045520_0_0_6"/>
<dbReference type="OMA" id="DWPYVEG"/>
<dbReference type="OrthoDB" id="9795587at2"/>
<dbReference type="Proteomes" id="UP000000541">
    <property type="component" value="Chromosome"/>
</dbReference>
<dbReference type="Proteomes" id="UP000002670">
    <property type="component" value="Chromosome"/>
</dbReference>
<dbReference type="GO" id="GO:0042597">
    <property type="term" value="C:periplasmic space"/>
    <property type="evidence" value="ECO:0007669"/>
    <property type="project" value="UniProtKB-SubCell"/>
</dbReference>
<dbReference type="GO" id="GO:0046872">
    <property type="term" value="F:metal ion binding"/>
    <property type="evidence" value="ECO:0007669"/>
    <property type="project" value="UniProtKB-KW"/>
</dbReference>
<dbReference type="GO" id="GO:0043546">
    <property type="term" value="F:molybdopterin cofactor binding"/>
    <property type="evidence" value="ECO:0007669"/>
    <property type="project" value="UniProtKB-UniRule"/>
</dbReference>
<dbReference type="GO" id="GO:0016672">
    <property type="term" value="F:oxidoreductase activity, acting on a sulfur group of donors, quinone or similar compound as acceptor"/>
    <property type="evidence" value="ECO:0007669"/>
    <property type="project" value="UniProtKB-UniRule"/>
</dbReference>
<dbReference type="GO" id="GO:0030091">
    <property type="term" value="P:protein repair"/>
    <property type="evidence" value="ECO:0007669"/>
    <property type="project" value="UniProtKB-UniRule"/>
</dbReference>
<dbReference type="CDD" id="cd02107">
    <property type="entry name" value="YedY_like_Moco"/>
    <property type="match status" value="1"/>
</dbReference>
<dbReference type="FunFam" id="3.90.420.10:FF:000001">
    <property type="entry name" value="Protein-methionine-sulfoxide reductase catalytic subunit MsrP"/>
    <property type="match status" value="1"/>
</dbReference>
<dbReference type="Gene3D" id="3.90.420.10">
    <property type="entry name" value="Oxidoreductase, molybdopterin-binding domain"/>
    <property type="match status" value="1"/>
</dbReference>
<dbReference type="HAMAP" id="MF_01206">
    <property type="entry name" value="MsrP"/>
    <property type="match status" value="1"/>
</dbReference>
<dbReference type="InterPro" id="IPR022867">
    <property type="entry name" value="MsrP"/>
</dbReference>
<dbReference type="InterPro" id="IPR000572">
    <property type="entry name" value="OxRdtase_Mopterin-bd_dom"/>
</dbReference>
<dbReference type="InterPro" id="IPR036374">
    <property type="entry name" value="OxRdtase_Mopterin-bd_sf"/>
</dbReference>
<dbReference type="InterPro" id="IPR006311">
    <property type="entry name" value="TAT_signal"/>
</dbReference>
<dbReference type="NCBIfam" id="NF003767">
    <property type="entry name" value="PRK05363.1"/>
    <property type="match status" value="1"/>
</dbReference>
<dbReference type="PANTHER" id="PTHR43032">
    <property type="entry name" value="PROTEIN-METHIONINE-SULFOXIDE REDUCTASE"/>
    <property type="match status" value="1"/>
</dbReference>
<dbReference type="PANTHER" id="PTHR43032:SF3">
    <property type="entry name" value="PROTEIN-METHIONINE-SULFOXIDE REDUCTASE CATALYTIC SUBUNIT MSRP"/>
    <property type="match status" value="1"/>
</dbReference>
<dbReference type="Pfam" id="PF00174">
    <property type="entry name" value="Oxidored_molyb"/>
    <property type="match status" value="1"/>
</dbReference>
<dbReference type="SUPFAM" id="SSF56524">
    <property type="entry name" value="Oxidoreductase molybdopterin-binding domain"/>
    <property type="match status" value="1"/>
</dbReference>
<dbReference type="PROSITE" id="PS51318">
    <property type="entry name" value="TAT"/>
    <property type="match status" value="1"/>
</dbReference>
<accession>P67348</accession>
<accession>Q8XES1</accession>
<protein>
    <recommendedName>
        <fullName evidence="1">Protein-methionine-sulfoxide reductase catalytic subunit MsrP</fullName>
        <ecNumber evidence="1">1.8.5.-</ecNumber>
    </recommendedName>
</protein>